<keyword id="KW-0997">Cell inner membrane</keyword>
<keyword id="KW-1003">Cell membrane</keyword>
<keyword id="KW-0406">Ion transport</keyword>
<keyword id="KW-0472">Membrane</keyword>
<keyword id="KW-0812">Transmembrane</keyword>
<keyword id="KW-1133">Transmembrane helix</keyword>
<keyword id="KW-0813">Transport</keyword>
<keyword id="KW-0862">Zinc</keyword>
<comment type="function">
    <text evidence="1">Zinc transporter. Acts as a Zn(2+):proton symporter, which likely mediates zinc ion uptake.</text>
</comment>
<comment type="catalytic activity">
    <reaction evidence="1">
        <text>Zn(2+)(out) + H(+)(out) = Zn(2+)(in) + H(+)(in)</text>
        <dbReference type="Rhea" id="RHEA:71195"/>
        <dbReference type="ChEBI" id="CHEBI:15378"/>
        <dbReference type="ChEBI" id="CHEBI:29105"/>
    </reaction>
    <physiologicalReaction direction="left-to-right" evidence="1">
        <dbReference type="Rhea" id="RHEA:71196"/>
    </physiologicalReaction>
</comment>
<comment type="subcellular location">
    <subcellularLocation>
        <location evidence="1">Cell inner membrane</location>
        <topology evidence="1">Multi-pass membrane protein</topology>
    </subcellularLocation>
</comment>
<comment type="similarity">
    <text evidence="1">Belongs to the CorA metal ion transporter (MIT) (TC 1.A.35) family.</text>
</comment>
<proteinExistence type="inferred from homology"/>
<feature type="chain" id="PRO_1000189716" description="Zinc transport protein ZntB">
    <location>
        <begin position="1"/>
        <end position="327"/>
    </location>
</feature>
<feature type="topological domain" description="Cytoplasmic" evidence="1">
    <location>
        <begin position="1"/>
        <end position="273"/>
    </location>
</feature>
<feature type="transmembrane region" description="Helical" evidence="1">
    <location>
        <begin position="274"/>
        <end position="294"/>
    </location>
</feature>
<feature type="topological domain" description="Periplasmic" evidence="1">
    <location>
        <begin position="295"/>
        <end position="300"/>
    </location>
</feature>
<feature type="transmembrane region" description="Helical" evidence="1">
    <location>
        <begin position="301"/>
        <end position="321"/>
    </location>
</feature>
<feature type="topological domain" description="Cytoplasmic" evidence="1">
    <location>
        <begin position="322"/>
        <end position="327"/>
    </location>
</feature>
<organism>
    <name type="scientific">Escherichia coli (strain SMS-3-5 / SECEC)</name>
    <dbReference type="NCBI Taxonomy" id="439855"/>
    <lineage>
        <taxon>Bacteria</taxon>
        <taxon>Pseudomonadati</taxon>
        <taxon>Pseudomonadota</taxon>
        <taxon>Gammaproteobacteria</taxon>
        <taxon>Enterobacterales</taxon>
        <taxon>Enterobacteriaceae</taxon>
        <taxon>Escherichia</taxon>
    </lineage>
</organism>
<gene>
    <name evidence="1" type="primary">zntB</name>
    <name type="ordered locus">EcSMS35_1780</name>
</gene>
<accession>B1LG86</accession>
<name>ZNTB_ECOSM</name>
<evidence type="ECO:0000255" key="1">
    <source>
        <dbReference type="HAMAP-Rule" id="MF_01565"/>
    </source>
</evidence>
<dbReference type="EMBL" id="CP000970">
    <property type="protein sequence ID" value="ACB18893.1"/>
    <property type="molecule type" value="Genomic_DNA"/>
</dbReference>
<dbReference type="RefSeq" id="WP_000387388.1">
    <property type="nucleotide sequence ID" value="NC_010498.1"/>
</dbReference>
<dbReference type="SMR" id="B1LG86"/>
<dbReference type="GeneID" id="93775479"/>
<dbReference type="KEGG" id="ecm:EcSMS35_1780"/>
<dbReference type="HOGENOM" id="CLU_007127_2_0_6"/>
<dbReference type="Proteomes" id="UP000007011">
    <property type="component" value="Chromosome"/>
</dbReference>
<dbReference type="GO" id="GO:0005886">
    <property type="term" value="C:plasma membrane"/>
    <property type="evidence" value="ECO:0007669"/>
    <property type="project" value="UniProtKB-SubCell"/>
</dbReference>
<dbReference type="GO" id="GO:0050897">
    <property type="term" value="F:cobalt ion binding"/>
    <property type="evidence" value="ECO:0007669"/>
    <property type="project" value="TreeGrafter"/>
</dbReference>
<dbReference type="GO" id="GO:0015087">
    <property type="term" value="F:cobalt ion transmembrane transporter activity"/>
    <property type="evidence" value="ECO:0007669"/>
    <property type="project" value="TreeGrafter"/>
</dbReference>
<dbReference type="GO" id="GO:0000287">
    <property type="term" value="F:magnesium ion binding"/>
    <property type="evidence" value="ECO:0007669"/>
    <property type="project" value="TreeGrafter"/>
</dbReference>
<dbReference type="GO" id="GO:0015095">
    <property type="term" value="F:magnesium ion transmembrane transporter activity"/>
    <property type="evidence" value="ECO:0007669"/>
    <property type="project" value="TreeGrafter"/>
</dbReference>
<dbReference type="GO" id="GO:0005385">
    <property type="term" value="F:zinc ion transmembrane transporter activity"/>
    <property type="evidence" value="ECO:0007669"/>
    <property type="project" value="UniProtKB-UniRule"/>
</dbReference>
<dbReference type="CDD" id="cd12833">
    <property type="entry name" value="ZntB-like_1"/>
    <property type="match status" value="1"/>
</dbReference>
<dbReference type="FunFam" id="1.20.58.340:FF:000002">
    <property type="entry name" value="Zinc transport protein ZntB"/>
    <property type="match status" value="1"/>
</dbReference>
<dbReference type="FunFam" id="1.20.58.340:FF:000003">
    <property type="entry name" value="Zinc transport protein ZntB"/>
    <property type="match status" value="1"/>
</dbReference>
<dbReference type="FunFam" id="3.30.460.20:FF:000001">
    <property type="entry name" value="Zinc transport protein ZntB"/>
    <property type="match status" value="1"/>
</dbReference>
<dbReference type="Gene3D" id="3.30.460.20">
    <property type="entry name" value="CorA soluble domain-like"/>
    <property type="match status" value="1"/>
</dbReference>
<dbReference type="Gene3D" id="1.20.58.340">
    <property type="entry name" value="Magnesium transport protein CorA, transmembrane region"/>
    <property type="match status" value="2"/>
</dbReference>
<dbReference type="HAMAP" id="MF_01565">
    <property type="entry name" value="ZntB"/>
    <property type="match status" value="1"/>
</dbReference>
<dbReference type="InterPro" id="IPR045861">
    <property type="entry name" value="CorA_cytoplasmic_dom"/>
</dbReference>
<dbReference type="InterPro" id="IPR045863">
    <property type="entry name" value="CorA_TM1_TM2"/>
</dbReference>
<dbReference type="InterPro" id="IPR002523">
    <property type="entry name" value="MgTranspt_CorA/ZnTranspt_ZntB"/>
</dbReference>
<dbReference type="InterPro" id="IPR023714">
    <property type="entry name" value="Zn_transp_ZntB"/>
</dbReference>
<dbReference type="NCBIfam" id="NF007092">
    <property type="entry name" value="PRK09546.1"/>
    <property type="match status" value="1"/>
</dbReference>
<dbReference type="PANTHER" id="PTHR46494">
    <property type="entry name" value="CORA FAMILY METAL ION TRANSPORTER (EUROFUNG)"/>
    <property type="match status" value="1"/>
</dbReference>
<dbReference type="PANTHER" id="PTHR46494:SF3">
    <property type="entry name" value="ZINC TRANSPORT PROTEIN ZNTB"/>
    <property type="match status" value="1"/>
</dbReference>
<dbReference type="Pfam" id="PF01544">
    <property type="entry name" value="CorA"/>
    <property type="match status" value="1"/>
</dbReference>
<dbReference type="SUPFAM" id="SSF143865">
    <property type="entry name" value="CorA soluble domain-like"/>
    <property type="match status" value="1"/>
</dbReference>
<dbReference type="SUPFAM" id="SSF144083">
    <property type="entry name" value="Magnesium transport protein CorA, transmembrane region"/>
    <property type="match status" value="1"/>
</dbReference>
<protein>
    <recommendedName>
        <fullName evidence="1">Zinc transport protein ZntB</fullName>
    </recommendedName>
</protein>
<sequence length="327" mass="36612">MEAIKGSDVNVPDAVFAWMLDGRGGVKPLENTDVIDEAHPCWLHLNYVHHDSAQWLATTPLLPNNVRDALAGESTRPRVSRLGEGTLITLRCINGSTDERPDQLVAMRVYMDGRLIVSTRQRKVLALDDVVSDLEEGTGPTDCGGWLVDVCDALTDHSSEFIEQLHDKIIDLEDNLLDQQIPPRGFLALLRKQLIVMRRYMAPQRDVYARLASERLPWMSDDQRRRMQDIADRLGRGLDEIDACIARTGVMADEIAQVMQENLARRTYTMSLMAMVFLPSTFLTGLFGVNLGGIPGGGWQFGFSIFCILLVVLIGGVALWLHRSKWL</sequence>
<reference key="1">
    <citation type="journal article" date="2008" name="J. Bacteriol.">
        <title>Insights into the environmental resistance gene pool from the genome sequence of the multidrug-resistant environmental isolate Escherichia coli SMS-3-5.</title>
        <authorList>
            <person name="Fricke W.F."/>
            <person name="Wright M.S."/>
            <person name="Lindell A.H."/>
            <person name="Harkins D.M."/>
            <person name="Baker-Austin C."/>
            <person name="Ravel J."/>
            <person name="Stepanauskas R."/>
        </authorList>
    </citation>
    <scope>NUCLEOTIDE SEQUENCE [LARGE SCALE GENOMIC DNA]</scope>
    <source>
        <strain>SMS-3-5 / SECEC</strain>
    </source>
</reference>